<organism>
    <name type="scientific">Listeria innocua serovar 6a (strain ATCC BAA-680 / CLIP 11262)</name>
    <dbReference type="NCBI Taxonomy" id="272626"/>
    <lineage>
        <taxon>Bacteria</taxon>
        <taxon>Bacillati</taxon>
        <taxon>Bacillota</taxon>
        <taxon>Bacilli</taxon>
        <taxon>Bacillales</taxon>
        <taxon>Listeriaceae</taxon>
        <taxon>Listeria</taxon>
    </lineage>
</organism>
<accession>Q92A19</accession>
<keyword id="KW-0963">Cytoplasm</keyword>
<keyword id="KW-0456">Lyase</keyword>
<keyword id="KW-0704">Schiff base</keyword>
<gene>
    <name evidence="1" type="primary">deoC</name>
    <name type="synonym">dra</name>
    <name type="ordered locus">lin2103</name>
</gene>
<name>DEOC_LISIN</name>
<reference key="1">
    <citation type="journal article" date="2001" name="Science">
        <title>Comparative genomics of Listeria species.</title>
        <authorList>
            <person name="Glaser P."/>
            <person name="Frangeul L."/>
            <person name="Buchrieser C."/>
            <person name="Rusniok C."/>
            <person name="Amend A."/>
            <person name="Baquero F."/>
            <person name="Berche P."/>
            <person name="Bloecker H."/>
            <person name="Brandt P."/>
            <person name="Chakraborty T."/>
            <person name="Charbit A."/>
            <person name="Chetouani F."/>
            <person name="Couve E."/>
            <person name="de Daruvar A."/>
            <person name="Dehoux P."/>
            <person name="Domann E."/>
            <person name="Dominguez-Bernal G."/>
            <person name="Duchaud E."/>
            <person name="Durant L."/>
            <person name="Dussurget O."/>
            <person name="Entian K.-D."/>
            <person name="Fsihi H."/>
            <person name="Garcia-del Portillo F."/>
            <person name="Garrido P."/>
            <person name="Gautier L."/>
            <person name="Goebel W."/>
            <person name="Gomez-Lopez N."/>
            <person name="Hain T."/>
            <person name="Hauf J."/>
            <person name="Jackson D."/>
            <person name="Jones L.-M."/>
            <person name="Kaerst U."/>
            <person name="Kreft J."/>
            <person name="Kuhn M."/>
            <person name="Kunst F."/>
            <person name="Kurapkat G."/>
            <person name="Madueno E."/>
            <person name="Maitournam A."/>
            <person name="Mata Vicente J."/>
            <person name="Ng E."/>
            <person name="Nedjari H."/>
            <person name="Nordsiek G."/>
            <person name="Novella S."/>
            <person name="de Pablos B."/>
            <person name="Perez-Diaz J.-C."/>
            <person name="Purcell R."/>
            <person name="Remmel B."/>
            <person name="Rose M."/>
            <person name="Schlueter T."/>
            <person name="Simoes N."/>
            <person name="Tierrez A."/>
            <person name="Vazquez-Boland J.-A."/>
            <person name="Voss H."/>
            <person name="Wehland J."/>
            <person name="Cossart P."/>
        </authorList>
    </citation>
    <scope>NUCLEOTIDE SEQUENCE [LARGE SCALE GENOMIC DNA]</scope>
    <source>
        <strain>ATCC BAA-680 / CLIP 11262</strain>
    </source>
</reference>
<comment type="function">
    <text evidence="1">Catalyzes a reversible aldol reaction between acetaldehyde and D-glyceraldehyde 3-phosphate to generate 2-deoxy-D-ribose 5-phosphate.</text>
</comment>
<comment type="catalytic activity">
    <reaction evidence="1">
        <text>2-deoxy-D-ribose 5-phosphate = D-glyceraldehyde 3-phosphate + acetaldehyde</text>
        <dbReference type="Rhea" id="RHEA:12821"/>
        <dbReference type="ChEBI" id="CHEBI:15343"/>
        <dbReference type="ChEBI" id="CHEBI:59776"/>
        <dbReference type="ChEBI" id="CHEBI:62877"/>
        <dbReference type="EC" id="4.1.2.4"/>
    </reaction>
</comment>
<comment type="pathway">
    <text evidence="1">Carbohydrate degradation; 2-deoxy-D-ribose 1-phosphate degradation; D-glyceraldehyde 3-phosphate and acetaldehyde from 2-deoxy-alpha-D-ribose 1-phosphate: step 2/2.</text>
</comment>
<comment type="subcellular location">
    <subcellularLocation>
        <location evidence="1">Cytoplasm</location>
    </subcellularLocation>
</comment>
<comment type="similarity">
    <text evidence="1">Belongs to the DeoC/FbaB aldolase family. DeoC type 1 subfamily.</text>
</comment>
<evidence type="ECO:0000255" key="1">
    <source>
        <dbReference type="HAMAP-Rule" id="MF_00114"/>
    </source>
</evidence>
<proteinExistence type="inferred from homology"/>
<dbReference type="EC" id="4.1.2.4" evidence="1"/>
<dbReference type="EMBL" id="AL596171">
    <property type="protein sequence ID" value="CAC97333.1"/>
    <property type="molecule type" value="Genomic_DNA"/>
</dbReference>
<dbReference type="PIR" id="AE1695">
    <property type="entry name" value="AE1695"/>
</dbReference>
<dbReference type="RefSeq" id="WP_003763218.1">
    <property type="nucleotide sequence ID" value="NC_003212.1"/>
</dbReference>
<dbReference type="SMR" id="Q92A19"/>
<dbReference type="STRING" id="272626.gene:17566461"/>
<dbReference type="KEGG" id="lin:dra"/>
<dbReference type="eggNOG" id="COG0274">
    <property type="taxonomic scope" value="Bacteria"/>
</dbReference>
<dbReference type="HOGENOM" id="CLU_053595_0_1_9"/>
<dbReference type="OrthoDB" id="9778711at2"/>
<dbReference type="UniPathway" id="UPA00002">
    <property type="reaction ID" value="UER00468"/>
</dbReference>
<dbReference type="Proteomes" id="UP000002513">
    <property type="component" value="Chromosome"/>
</dbReference>
<dbReference type="GO" id="GO:0005737">
    <property type="term" value="C:cytoplasm"/>
    <property type="evidence" value="ECO:0007669"/>
    <property type="project" value="UniProtKB-SubCell"/>
</dbReference>
<dbReference type="GO" id="GO:0004139">
    <property type="term" value="F:deoxyribose-phosphate aldolase activity"/>
    <property type="evidence" value="ECO:0007669"/>
    <property type="project" value="UniProtKB-UniRule"/>
</dbReference>
<dbReference type="GO" id="GO:0006018">
    <property type="term" value="P:2-deoxyribose 1-phosphate catabolic process"/>
    <property type="evidence" value="ECO:0007669"/>
    <property type="project" value="UniProtKB-UniRule"/>
</dbReference>
<dbReference type="GO" id="GO:0016052">
    <property type="term" value="P:carbohydrate catabolic process"/>
    <property type="evidence" value="ECO:0007669"/>
    <property type="project" value="TreeGrafter"/>
</dbReference>
<dbReference type="GO" id="GO:0009264">
    <property type="term" value="P:deoxyribonucleotide catabolic process"/>
    <property type="evidence" value="ECO:0007669"/>
    <property type="project" value="InterPro"/>
</dbReference>
<dbReference type="CDD" id="cd00959">
    <property type="entry name" value="DeoC"/>
    <property type="match status" value="1"/>
</dbReference>
<dbReference type="FunFam" id="3.20.20.70:FF:000044">
    <property type="entry name" value="Deoxyribose-phosphate aldolase"/>
    <property type="match status" value="1"/>
</dbReference>
<dbReference type="Gene3D" id="3.20.20.70">
    <property type="entry name" value="Aldolase class I"/>
    <property type="match status" value="1"/>
</dbReference>
<dbReference type="HAMAP" id="MF_00114">
    <property type="entry name" value="DeoC_type1"/>
    <property type="match status" value="1"/>
</dbReference>
<dbReference type="InterPro" id="IPR013785">
    <property type="entry name" value="Aldolase_TIM"/>
</dbReference>
<dbReference type="InterPro" id="IPR011343">
    <property type="entry name" value="DeoC"/>
</dbReference>
<dbReference type="InterPro" id="IPR002915">
    <property type="entry name" value="DeoC/FbaB/LacD_aldolase"/>
</dbReference>
<dbReference type="InterPro" id="IPR028581">
    <property type="entry name" value="DeoC_typeI"/>
</dbReference>
<dbReference type="NCBIfam" id="TIGR00126">
    <property type="entry name" value="deoC"/>
    <property type="match status" value="1"/>
</dbReference>
<dbReference type="PANTHER" id="PTHR10889">
    <property type="entry name" value="DEOXYRIBOSE-PHOSPHATE ALDOLASE"/>
    <property type="match status" value="1"/>
</dbReference>
<dbReference type="PANTHER" id="PTHR10889:SF1">
    <property type="entry name" value="DEOXYRIBOSE-PHOSPHATE ALDOLASE"/>
    <property type="match status" value="1"/>
</dbReference>
<dbReference type="Pfam" id="PF01791">
    <property type="entry name" value="DeoC"/>
    <property type="match status" value="1"/>
</dbReference>
<dbReference type="PIRSF" id="PIRSF001357">
    <property type="entry name" value="DeoC"/>
    <property type="match status" value="1"/>
</dbReference>
<dbReference type="SMART" id="SM01133">
    <property type="entry name" value="DeoC"/>
    <property type="match status" value="1"/>
</dbReference>
<dbReference type="SUPFAM" id="SSF51569">
    <property type="entry name" value="Aldolase"/>
    <property type="match status" value="1"/>
</dbReference>
<feature type="chain" id="PRO_0000057237" description="Deoxyribose-phosphate aldolase">
    <location>
        <begin position="1"/>
        <end position="223"/>
    </location>
</feature>
<feature type="active site" description="Proton donor/acceptor" evidence="1">
    <location>
        <position position="89"/>
    </location>
</feature>
<feature type="active site" description="Schiff-base intermediate with acetaldehyde" evidence="1">
    <location>
        <position position="152"/>
    </location>
</feature>
<feature type="active site" description="Proton donor/acceptor" evidence="1">
    <location>
        <position position="181"/>
    </location>
</feature>
<protein>
    <recommendedName>
        <fullName evidence="1">Deoxyribose-phosphate aldolase</fullName>
        <shortName evidence="1">DERA</shortName>
        <ecNumber evidence="1">4.1.2.4</ecNumber>
    </recommendedName>
    <alternativeName>
        <fullName evidence="1">2-deoxy-D-ribose 5-phosphate aldolase</fullName>
    </alternativeName>
    <alternativeName>
        <fullName evidence="1">Phosphodeoxyriboaldolase</fullName>
        <shortName evidence="1">Deoxyriboaldolase</shortName>
    </alternativeName>
</protein>
<sequence length="223" mass="23525">MTIAKMIDHTALKPDTTKEQILTLTKEAREYGFASVCVNPTWVKLSAEQLSGAESVVCTVIGFPLGANTPEVKAFEVKNAIENGAKEVDMVINIGALKDKDDELVERDIRAVVDAAKGKALVKVIIETCLLTDEEKVRACEIAVKAGTDFVKTSTGFSTGGATAEDIALMRKTVGPNIGVKASGGVRTKEDVEKMIEAGATRIGASAGVAIVSGEKPAKPDNY</sequence>